<accession>Q5B630</accession>
<accession>C8V5R9</accession>
<accession>Q92227</accession>
<protein>
    <recommendedName>
        <fullName>Polyadenylate-binding protein, cytoplasmic and nuclear</fullName>
        <shortName>PABP</shortName>
        <shortName>Poly(A)-binding protein</shortName>
    </recommendedName>
    <alternativeName>
        <fullName>Polyadenylate tail-binding protein</fullName>
    </alternativeName>
</protein>
<sequence length="732" mass="79321">MSAETSTTPAPAENTNGTPDNAPAPEVTAVEAPATTSQPHSASLYVGELDPSVTEAMLYELFSSIGQVASIRVCRDAVTRRSLGYAYVNYNDTAHGERALDELNYTLIKGKPCRIMWSQRDPALRKTGQGNVFIKNLDSAIDNKALHDTFAAFGNILSCKVAQDEFGVSKGYGFVHYETAEAANNAIKHVNGMLLNDKKVFVGHHISKKDRQSKFEEMKANFTNIYIKNIDPEVEDEEFRKLFEKFGEITSATLSRDSEGKSRGFGFVNFSTHESAQAAVEEMNDKEVRSQKLYVGRAQKKHEREEELRKQYEAARMEKASKYQGVNLYVKNLTDDVDDDKLRELFGPYGTITSAKVMRDTAPVETATPESETKESANKENEKAAEGEKEPAAEEKEKEEKKEAEQKPEKKPLGKSKGFGFVCFSSPDEASKAVTEMNQRMVNGKPLYVALAQRKDVRRSQLEASIQARNNIRQQQAAAAAGMGQAYMAPAVFYGPGQQGFIPGAQRGGMFPPQPGMMMGMPGRPGQYPGPFPGQQGGRGVGPNQQIPPNFQGLPMGAMQGPGIPNGMGYPMVQGQFGGGRGRGQVPGMGGPMRGGYGGGRGGVPLGGQMRPGQGGRGQAVGQPGPETPVGVLTAQALSAAPPQQQKQMLGEALYPKIQATQPELAGKITGMLLEMDNTELLGLLEDDEALRAKVDEALSVYDEYMKNKSDEPAAEKPKEAAQEAPAEENKA</sequence>
<feature type="chain" id="PRO_0000295390" description="Polyadenylate-binding protein, cytoplasmic and nuclear">
    <location>
        <begin position="1"/>
        <end position="732"/>
    </location>
</feature>
<feature type="domain" description="RRM 1" evidence="2">
    <location>
        <begin position="42"/>
        <end position="120"/>
    </location>
</feature>
<feature type="domain" description="RRM 2" evidence="2">
    <location>
        <begin position="130"/>
        <end position="207"/>
    </location>
</feature>
<feature type="domain" description="RRM 3" evidence="2">
    <location>
        <begin position="223"/>
        <end position="300"/>
    </location>
</feature>
<feature type="domain" description="RRM 4" evidence="2">
    <location>
        <begin position="326"/>
        <end position="454"/>
    </location>
</feature>
<feature type="domain" description="PABC" evidence="3">
    <location>
        <begin position="630"/>
        <end position="707"/>
    </location>
</feature>
<feature type="region of interest" description="Disordered" evidence="4">
    <location>
        <begin position="1"/>
        <end position="26"/>
    </location>
</feature>
<feature type="region of interest" description="Disordered" evidence="4">
    <location>
        <begin position="357"/>
        <end position="413"/>
    </location>
</feature>
<feature type="region of interest" description="Disordered" evidence="4">
    <location>
        <begin position="706"/>
        <end position="732"/>
    </location>
</feature>
<feature type="compositionally biased region" description="Polar residues" evidence="4">
    <location>
        <begin position="1"/>
        <end position="19"/>
    </location>
</feature>
<feature type="compositionally biased region" description="Basic and acidic residues" evidence="4">
    <location>
        <begin position="371"/>
        <end position="412"/>
    </location>
</feature>
<feature type="sequence conflict" description="In Ref. 1; AAB16848." evidence="6" ref="1">
    <original>K</original>
    <variation>E</variation>
    <location>
        <position position="401"/>
    </location>
</feature>
<keyword id="KW-0963">Cytoplasm</keyword>
<keyword id="KW-0507">mRNA processing</keyword>
<keyword id="KW-0509">mRNA transport</keyword>
<keyword id="KW-0539">Nucleus</keyword>
<keyword id="KW-1185">Reference proteome</keyword>
<keyword id="KW-0677">Repeat</keyword>
<keyword id="KW-0694">RNA-binding</keyword>
<keyword id="KW-0810">Translation regulation</keyword>
<keyword id="KW-0813">Transport</keyword>
<dbReference type="EMBL" id="U70731">
    <property type="protein sequence ID" value="AAB16848.1"/>
    <property type="molecule type" value="Genomic_DNA"/>
</dbReference>
<dbReference type="EMBL" id="AACD01000065">
    <property type="protein sequence ID" value="EAA59471.1"/>
    <property type="molecule type" value="Genomic_DNA"/>
</dbReference>
<dbReference type="EMBL" id="BN001302">
    <property type="protein sequence ID" value="CBF74916.1"/>
    <property type="molecule type" value="Genomic_DNA"/>
</dbReference>
<dbReference type="RefSeq" id="XP_661604.1">
    <property type="nucleotide sequence ID" value="XM_656512.1"/>
</dbReference>
<dbReference type="SMR" id="Q5B630"/>
<dbReference type="FunCoup" id="Q5B630">
    <property type="interactions" value="1251"/>
</dbReference>
<dbReference type="STRING" id="227321.Q5B630"/>
<dbReference type="EnsemblFungi" id="CBF74916">
    <property type="protein sequence ID" value="CBF74916"/>
    <property type="gene ID" value="ANIA_04000"/>
</dbReference>
<dbReference type="VEuPathDB" id="FungiDB:AN4000"/>
<dbReference type="eggNOG" id="KOG0123">
    <property type="taxonomic scope" value="Eukaryota"/>
</dbReference>
<dbReference type="HOGENOM" id="CLU_012062_22_4_1"/>
<dbReference type="InParanoid" id="Q5B630"/>
<dbReference type="OMA" id="QQPGFMP"/>
<dbReference type="OrthoDB" id="19742at2759"/>
<dbReference type="Proteomes" id="UP000000560">
    <property type="component" value="Chromosome II"/>
</dbReference>
<dbReference type="GO" id="GO:0010494">
    <property type="term" value="C:cytoplasmic stress granule"/>
    <property type="evidence" value="ECO:0000318"/>
    <property type="project" value="GO_Central"/>
</dbReference>
<dbReference type="GO" id="GO:0005829">
    <property type="term" value="C:cytosol"/>
    <property type="evidence" value="ECO:0000318"/>
    <property type="project" value="GO_Central"/>
</dbReference>
<dbReference type="GO" id="GO:0005634">
    <property type="term" value="C:nucleus"/>
    <property type="evidence" value="ECO:0000318"/>
    <property type="project" value="GO_Central"/>
</dbReference>
<dbReference type="GO" id="GO:1990904">
    <property type="term" value="C:ribonucleoprotein complex"/>
    <property type="evidence" value="ECO:0000318"/>
    <property type="project" value="GO_Central"/>
</dbReference>
<dbReference type="GO" id="GO:0003730">
    <property type="term" value="F:mRNA 3'-UTR binding"/>
    <property type="evidence" value="ECO:0000318"/>
    <property type="project" value="GO_Central"/>
</dbReference>
<dbReference type="GO" id="GO:0008143">
    <property type="term" value="F:poly(A) binding"/>
    <property type="evidence" value="ECO:0000250"/>
    <property type="project" value="AspGD"/>
</dbReference>
<dbReference type="GO" id="GO:0008266">
    <property type="term" value="F:poly(U) RNA binding"/>
    <property type="evidence" value="ECO:0000318"/>
    <property type="project" value="GO_Central"/>
</dbReference>
<dbReference type="GO" id="GO:0006397">
    <property type="term" value="P:mRNA processing"/>
    <property type="evidence" value="ECO:0007669"/>
    <property type="project" value="UniProtKB-KW"/>
</dbReference>
<dbReference type="GO" id="GO:0051028">
    <property type="term" value="P:mRNA transport"/>
    <property type="evidence" value="ECO:0007669"/>
    <property type="project" value="UniProtKB-KW"/>
</dbReference>
<dbReference type="GO" id="GO:0006417">
    <property type="term" value="P:regulation of translation"/>
    <property type="evidence" value="ECO:0007669"/>
    <property type="project" value="UniProtKB-KW"/>
</dbReference>
<dbReference type="CDD" id="cd12378">
    <property type="entry name" value="RRM1_I_PABPs"/>
    <property type="match status" value="1"/>
</dbReference>
<dbReference type="CDD" id="cd12379">
    <property type="entry name" value="RRM2_I_PABPs"/>
    <property type="match status" value="1"/>
</dbReference>
<dbReference type="CDD" id="cd12380">
    <property type="entry name" value="RRM3_I_PABPs"/>
    <property type="match status" value="1"/>
</dbReference>
<dbReference type="CDD" id="cd12381">
    <property type="entry name" value="RRM4_I_PABPs"/>
    <property type="match status" value="1"/>
</dbReference>
<dbReference type="FunFam" id="1.10.1900.10:FF:000004">
    <property type="entry name" value="Polyadenylate-binding protein"/>
    <property type="match status" value="1"/>
</dbReference>
<dbReference type="FunFam" id="3.30.70.330:FF:000003">
    <property type="entry name" value="Polyadenylate-binding protein"/>
    <property type="match status" value="1"/>
</dbReference>
<dbReference type="FunFam" id="3.30.70.330:FF:000355">
    <property type="entry name" value="Polyadenylate-binding protein"/>
    <property type="match status" value="1"/>
</dbReference>
<dbReference type="FunFam" id="3.30.70.330:FF:000384">
    <property type="entry name" value="Polyadenylate-binding protein"/>
    <property type="match status" value="1"/>
</dbReference>
<dbReference type="Gene3D" id="3.30.70.330">
    <property type="match status" value="4"/>
</dbReference>
<dbReference type="Gene3D" id="1.10.1900.10">
    <property type="entry name" value="c-terminal domain of poly(a) binding protein"/>
    <property type="match status" value="1"/>
</dbReference>
<dbReference type="InterPro" id="IPR012677">
    <property type="entry name" value="Nucleotide-bd_a/b_plait_sf"/>
</dbReference>
<dbReference type="InterPro" id="IPR036053">
    <property type="entry name" value="PABP-dom"/>
</dbReference>
<dbReference type="InterPro" id="IPR006515">
    <property type="entry name" value="PABP_1234"/>
</dbReference>
<dbReference type="InterPro" id="IPR002004">
    <property type="entry name" value="PABP_HYD_C"/>
</dbReference>
<dbReference type="InterPro" id="IPR034364">
    <property type="entry name" value="PABP_RRM1"/>
</dbReference>
<dbReference type="InterPro" id="IPR035979">
    <property type="entry name" value="RBD_domain_sf"/>
</dbReference>
<dbReference type="InterPro" id="IPR045305">
    <property type="entry name" value="RRM2_I_PABPs"/>
</dbReference>
<dbReference type="InterPro" id="IPR000504">
    <property type="entry name" value="RRM_dom"/>
</dbReference>
<dbReference type="NCBIfam" id="TIGR01628">
    <property type="entry name" value="PABP-1234"/>
    <property type="match status" value="1"/>
</dbReference>
<dbReference type="PANTHER" id="PTHR24012">
    <property type="entry name" value="RNA BINDING PROTEIN"/>
    <property type="match status" value="1"/>
</dbReference>
<dbReference type="Pfam" id="PF00658">
    <property type="entry name" value="MLLE"/>
    <property type="match status" value="1"/>
</dbReference>
<dbReference type="Pfam" id="PF00076">
    <property type="entry name" value="RRM_1"/>
    <property type="match status" value="5"/>
</dbReference>
<dbReference type="SMART" id="SM00517">
    <property type="entry name" value="PolyA"/>
    <property type="match status" value="1"/>
</dbReference>
<dbReference type="SMART" id="SM00360">
    <property type="entry name" value="RRM"/>
    <property type="match status" value="4"/>
</dbReference>
<dbReference type="SUPFAM" id="SSF63570">
    <property type="entry name" value="PABC (PABP) domain"/>
    <property type="match status" value="1"/>
</dbReference>
<dbReference type="SUPFAM" id="SSF54928">
    <property type="entry name" value="RNA-binding domain, RBD"/>
    <property type="match status" value="3"/>
</dbReference>
<dbReference type="PROSITE" id="PS51309">
    <property type="entry name" value="PABC"/>
    <property type="match status" value="1"/>
</dbReference>
<dbReference type="PROSITE" id="PS50102">
    <property type="entry name" value="RRM"/>
    <property type="match status" value="4"/>
</dbReference>
<name>PABP_EMENI</name>
<comment type="function">
    <text evidence="1">Binds the poly(A) tail of mRNA. Appears to be an important mediator of the multiple roles of the poly(A) tail in mRNA biogenesis, stability and translation. In the nucleus, involved in both mRNA cleavage and polyadenylation. Is also required for efficient mRNA export to the cytoplasm. Acts in concert with a poly(A)-specific nuclease (PAN) to affect poly(A) tail shortening, which may occur concomitantly with either nucleocytoplasmic mRNA transport or translational initiation. In the cytoplasm, stimulates translation initiation and regulates mRNA decay through translation termination-coupled poly(A) shortening, probably mediated by PAN (By similarity).</text>
</comment>
<comment type="subcellular location">
    <subcellularLocation>
        <location evidence="1">Cytoplasm</location>
    </subcellularLocation>
    <subcellularLocation>
        <location evidence="1">Nucleus</location>
    </subcellularLocation>
</comment>
<comment type="induction">
    <text evidence="5">Constitutively expressed throughout the vegetative cell cycle.</text>
</comment>
<comment type="similarity">
    <text evidence="6">Belongs to the polyadenylate-binding protein type-1 family.</text>
</comment>
<reference key="1">
    <citation type="journal article" date="1996" name="Genetics">
        <title>Aspergillus fabM encodes an essential product that is related to poly(A)-binding proteins and activates development when overexpressed.</title>
        <authorList>
            <person name="Marhoul J.F."/>
            <person name="Adams T.H."/>
        </authorList>
    </citation>
    <scope>NUCLEOTIDE SEQUENCE [GENOMIC DNA]</scope>
    <scope>INDUCTION</scope>
</reference>
<reference key="2">
    <citation type="journal article" date="2005" name="Nature">
        <title>Sequencing of Aspergillus nidulans and comparative analysis with A. fumigatus and A. oryzae.</title>
        <authorList>
            <person name="Galagan J.E."/>
            <person name="Calvo S.E."/>
            <person name="Cuomo C."/>
            <person name="Ma L.-J."/>
            <person name="Wortman J.R."/>
            <person name="Batzoglou S."/>
            <person name="Lee S.-I."/>
            <person name="Bastuerkmen M."/>
            <person name="Spevak C.C."/>
            <person name="Clutterbuck J."/>
            <person name="Kapitonov V."/>
            <person name="Jurka J."/>
            <person name="Scazzocchio C."/>
            <person name="Farman M.L."/>
            <person name="Butler J."/>
            <person name="Purcell S."/>
            <person name="Harris S."/>
            <person name="Braus G.H."/>
            <person name="Draht O."/>
            <person name="Busch S."/>
            <person name="D'Enfert C."/>
            <person name="Bouchier C."/>
            <person name="Goldman G.H."/>
            <person name="Bell-Pedersen D."/>
            <person name="Griffiths-Jones S."/>
            <person name="Doonan J.H."/>
            <person name="Yu J."/>
            <person name="Vienken K."/>
            <person name="Pain A."/>
            <person name="Freitag M."/>
            <person name="Selker E.U."/>
            <person name="Archer D.B."/>
            <person name="Penalva M.A."/>
            <person name="Oakley B.R."/>
            <person name="Momany M."/>
            <person name="Tanaka T."/>
            <person name="Kumagai T."/>
            <person name="Asai K."/>
            <person name="Machida M."/>
            <person name="Nierman W.C."/>
            <person name="Denning D.W."/>
            <person name="Caddick M.X."/>
            <person name="Hynes M."/>
            <person name="Paoletti M."/>
            <person name="Fischer R."/>
            <person name="Miller B.L."/>
            <person name="Dyer P.S."/>
            <person name="Sachs M.S."/>
            <person name="Osmani S.A."/>
            <person name="Birren B.W."/>
        </authorList>
    </citation>
    <scope>NUCLEOTIDE SEQUENCE [LARGE SCALE GENOMIC DNA]</scope>
    <source>
        <strain>FGSC A4 / ATCC 38163 / CBS 112.46 / NRRL 194 / M139</strain>
    </source>
</reference>
<reference key="3">
    <citation type="journal article" date="2009" name="Fungal Genet. Biol.">
        <title>The 2008 update of the Aspergillus nidulans genome annotation: a community effort.</title>
        <authorList>
            <person name="Wortman J.R."/>
            <person name="Gilsenan J.M."/>
            <person name="Joardar V."/>
            <person name="Deegan J."/>
            <person name="Clutterbuck J."/>
            <person name="Andersen M.R."/>
            <person name="Archer D."/>
            <person name="Bencina M."/>
            <person name="Braus G."/>
            <person name="Coutinho P."/>
            <person name="von Dohren H."/>
            <person name="Doonan J."/>
            <person name="Driessen A.J."/>
            <person name="Durek P."/>
            <person name="Espeso E."/>
            <person name="Fekete E."/>
            <person name="Flipphi M."/>
            <person name="Estrada C.G."/>
            <person name="Geysens S."/>
            <person name="Goldman G."/>
            <person name="de Groot P.W."/>
            <person name="Hansen K."/>
            <person name="Harris S.D."/>
            <person name="Heinekamp T."/>
            <person name="Helmstaedt K."/>
            <person name="Henrissat B."/>
            <person name="Hofmann G."/>
            <person name="Homan T."/>
            <person name="Horio T."/>
            <person name="Horiuchi H."/>
            <person name="James S."/>
            <person name="Jones M."/>
            <person name="Karaffa L."/>
            <person name="Karanyi Z."/>
            <person name="Kato M."/>
            <person name="Keller N."/>
            <person name="Kelly D.E."/>
            <person name="Kiel J.A."/>
            <person name="Kim J.M."/>
            <person name="van der Klei I.J."/>
            <person name="Klis F.M."/>
            <person name="Kovalchuk A."/>
            <person name="Krasevec N."/>
            <person name="Kubicek C.P."/>
            <person name="Liu B."/>
            <person name="Maccabe A."/>
            <person name="Meyer V."/>
            <person name="Mirabito P."/>
            <person name="Miskei M."/>
            <person name="Mos M."/>
            <person name="Mullins J."/>
            <person name="Nelson D.R."/>
            <person name="Nielsen J."/>
            <person name="Oakley B.R."/>
            <person name="Osmani S.A."/>
            <person name="Pakula T."/>
            <person name="Paszewski A."/>
            <person name="Paulsen I."/>
            <person name="Pilsyk S."/>
            <person name="Pocsi I."/>
            <person name="Punt P.J."/>
            <person name="Ram A.F."/>
            <person name="Ren Q."/>
            <person name="Robellet X."/>
            <person name="Robson G."/>
            <person name="Seiboth B."/>
            <person name="van Solingen P."/>
            <person name="Specht T."/>
            <person name="Sun J."/>
            <person name="Taheri-Talesh N."/>
            <person name="Takeshita N."/>
            <person name="Ussery D."/>
            <person name="vanKuyk P.A."/>
            <person name="Visser H."/>
            <person name="van de Vondervoort P.J."/>
            <person name="de Vries R.P."/>
            <person name="Walton J."/>
            <person name="Xiang X."/>
            <person name="Xiong Y."/>
            <person name="Zeng A.P."/>
            <person name="Brandt B.W."/>
            <person name="Cornell M.J."/>
            <person name="van den Hondel C.A."/>
            <person name="Visser J."/>
            <person name="Oliver S.G."/>
            <person name="Turner G."/>
        </authorList>
    </citation>
    <scope>GENOME REANNOTATION</scope>
    <source>
        <strain>FGSC A4 / ATCC 38163 / CBS 112.46 / NRRL 194 / M139</strain>
    </source>
</reference>
<organism>
    <name type="scientific">Emericella nidulans (strain FGSC A4 / ATCC 38163 / CBS 112.46 / NRRL 194 / M139)</name>
    <name type="common">Aspergillus nidulans</name>
    <dbReference type="NCBI Taxonomy" id="227321"/>
    <lineage>
        <taxon>Eukaryota</taxon>
        <taxon>Fungi</taxon>
        <taxon>Dikarya</taxon>
        <taxon>Ascomycota</taxon>
        <taxon>Pezizomycotina</taxon>
        <taxon>Eurotiomycetes</taxon>
        <taxon>Eurotiomycetidae</taxon>
        <taxon>Eurotiales</taxon>
        <taxon>Aspergillaceae</taxon>
        <taxon>Aspergillus</taxon>
        <taxon>Aspergillus subgen. Nidulantes</taxon>
    </lineage>
</organism>
<proteinExistence type="evidence at transcript level"/>
<gene>
    <name type="primary">pab1</name>
    <name type="synonym">fabM</name>
    <name type="ORF">AN4000</name>
</gene>
<evidence type="ECO:0000250" key="1"/>
<evidence type="ECO:0000255" key="2">
    <source>
        <dbReference type="PROSITE-ProRule" id="PRU00176"/>
    </source>
</evidence>
<evidence type="ECO:0000255" key="3">
    <source>
        <dbReference type="PROSITE-ProRule" id="PRU00641"/>
    </source>
</evidence>
<evidence type="ECO:0000256" key="4">
    <source>
        <dbReference type="SAM" id="MobiDB-lite"/>
    </source>
</evidence>
<evidence type="ECO:0000269" key="5">
    <source>
    </source>
</evidence>
<evidence type="ECO:0000305" key="6"/>